<accession>A5EWF5</accession>
<reference key="1">
    <citation type="journal article" date="2007" name="Nat. Biotechnol.">
        <title>Genome sequence and identification of candidate vaccine antigens from the animal pathogen Dichelobacter nodosus.</title>
        <authorList>
            <person name="Myers G.S.A."/>
            <person name="Parker D."/>
            <person name="Al-Hasani K."/>
            <person name="Kennan R.M."/>
            <person name="Seemann T."/>
            <person name="Ren Q."/>
            <person name="Badger J.H."/>
            <person name="Selengut J.D."/>
            <person name="Deboy R.T."/>
            <person name="Tettelin H."/>
            <person name="Boyce J.D."/>
            <person name="McCarl V.P."/>
            <person name="Han X."/>
            <person name="Nelson W.C."/>
            <person name="Madupu R."/>
            <person name="Mohamoud Y."/>
            <person name="Holley T."/>
            <person name="Fedorova N."/>
            <person name="Khouri H."/>
            <person name="Bottomley S.P."/>
            <person name="Whittington R.J."/>
            <person name="Adler B."/>
            <person name="Songer J.G."/>
            <person name="Rood J.I."/>
            <person name="Paulsen I.T."/>
        </authorList>
    </citation>
    <scope>NUCLEOTIDE SEQUENCE [LARGE SCALE GENOMIC DNA]</scope>
    <source>
        <strain>VCS1703A</strain>
    </source>
</reference>
<evidence type="ECO:0000255" key="1">
    <source>
        <dbReference type="HAMAP-Rule" id="MF_00444"/>
    </source>
</evidence>
<protein>
    <recommendedName>
        <fullName evidence="1">ATP-dependent Clp protease proteolytic subunit</fullName>
        <ecNumber evidence="1">3.4.21.92</ecNumber>
    </recommendedName>
    <alternativeName>
        <fullName evidence="1">Endopeptidase Clp</fullName>
    </alternativeName>
</protein>
<gene>
    <name evidence="1" type="primary">clpP</name>
    <name type="ordered locus">DNO_0229</name>
</gene>
<organism>
    <name type="scientific">Dichelobacter nodosus (strain VCS1703A)</name>
    <dbReference type="NCBI Taxonomy" id="246195"/>
    <lineage>
        <taxon>Bacteria</taxon>
        <taxon>Pseudomonadati</taxon>
        <taxon>Pseudomonadota</taxon>
        <taxon>Gammaproteobacteria</taxon>
        <taxon>Cardiobacteriales</taxon>
        <taxon>Cardiobacteriaceae</taxon>
        <taxon>Dichelobacter</taxon>
    </lineage>
</organism>
<proteinExistence type="inferred from homology"/>
<name>CLPP_DICNV</name>
<feature type="chain" id="PRO_1000026089" description="ATP-dependent Clp protease proteolytic subunit">
    <location>
        <begin position="1"/>
        <end position="203"/>
    </location>
</feature>
<feature type="active site" description="Nucleophile" evidence="1">
    <location>
        <position position="103"/>
    </location>
</feature>
<feature type="active site" evidence="1">
    <location>
        <position position="128"/>
    </location>
</feature>
<dbReference type="EC" id="3.4.21.92" evidence="1"/>
<dbReference type="EMBL" id="CP000513">
    <property type="protein sequence ID" value="ABQ13877.1"/>
    <property type="molecule type" value="Genomic_DNA"/>
</dbReference>
<dbReference type="RefSeq" id="WP_011927975.1">
    <property type="nucleotide sequence ID" value="NC_009446.1"/>
</dbReference>
<dbReference type="SMR" id="A5EWF5"/>
<dbReference type="STRING" id="246195.DNO_0229"/>
<dbReference type="MEROPS" id="S14.001"/>
<dbReference type="KEGG" id="dno:DNO_0229"/>
<dbReference type="eggNOG" id="COG0740">
    <property type="taxonomic scope" value="Bacteria"/>
</dbReference>
<dbReference type="HOGENOM" id="CLU_058707_3_2_6"/>
<dbReference type="OrthoDB" id="9802800at2"/>
<dbReference type="Proteomes" id="UP000000248">
    <property type="component" value="Chromosome"/>
</dbReference>
<dbReference type="GO" id="GO:0005737">
    <property type="term" value="C:cytoplasm"/>
    <property type="evidence" value="ECO:0007669"/>
    <property type="project" value="UniProtKB-SubCell"/>
</dbReference>
<dbReference type="GO" id="GO:0009368">
    <property type="term" value="C:endopeptidase Clp complex"/>
    <property type="evidence" value="ECO:0007669"/>
    <property type="project" value="TreeGrafter"/>
</dbReference>
<dbReference type="GO" id="GO:0004176">
    <property type="term" value="F:ATP-dependent peptidase activity"/>
    <property type="evidence" value="ECO:0007669"/>
    <property type="project" value="InterPro"/>
</dbReference>
<dbReference type="GO" id="GO:0051117">
    <property type="term" value="F:ATPase binding"/>
    <property type="evidence" value="ECO:0007669"/>
    <property type="project" value="TreeGrafter"/>
</dbReference>
<dbReference type="GO" id="GO:0004252">
    <property type="term" value="F:serine-type endopeptidase activity"/>
    <property type="evidence" value="ECO:0007669"/>
    <property type="project" value="UniProtKB-UniRule"/>
</dbReference>
<dbReference type="GO" id="GO:0006515">
    <property type="term" value="P:protein quality control for misfolded or incompletely synthesized proteins"/>
    <property type="evidence" value="ECO:0007669"/>
    <property type="project" value="TreeGrafter"/>
</dbReference>
<dbReference type="CDD" id="cd07017">
    <property type="entry name" value="S14_ClpP_2"/>
    <property type="match status" value="1"/>
</dbReference>
<dbReference type="FunFam" id="3.90.226.10:FF:000001">
    <property type="entry name" value="ATP-dependent Clp protease proteolytic subunit"/>
    <property type="match status" value="1"/>
</dbReference>
<dbReference type="Gene3D" id="3.90.226.10">
    <property type="entry name" value="2-enoyl-CoA Hydratase, Chain A, domain 1"/>
    <property type="match status" value="1"/>
</dbReference>
<dbReference type="HAMAP" id="MF_00444">
    <property type="entry name" value="ClpP"/>
    <property type="match status" value="1"/>
</dbReference>
<dbReference type="InterPro" id="IPR001907">
    <property type="entry name" value="ClpP"/>
</dbReference>
<dbReference type="InterPro" id="IPR029045">
    <property type="entry name" value="ClpP/crotonase-like_dom_sf"/>
</dbReference>
<dbReference type="InterPro" id="IPR023562">
    <property type="entry name" value="ClpP/TepA"/>
</dbReference>
<dbReference type="InterPro" id="IPR033135">
    <property type="entry name" value="ClpP_His_AS"/>
</dbReference>
<dbReference type="InterPro" id="IPR018215">
    <property type="entry name" value="ClpP_Ser_AS"/>
</dbReference>
<dbReference type="NCBIfam" id="TIGR00493">
    <property type="entry name" value="clpP"/>
    <property type="match status" value="1"/>
</dbReference>
<dbReference type="NCBIfam" id="NF001368">
    <property type="entry name" value="PRK00277.1"/>
    <property type="match status" value="1"/>
</dbReference>
<dbReference type="NCBIfam" id="NF009205">
    <property type="entry name" value="PRK12553.1"/>
    <property type="match status" value="1"/>
</dbReference>
<dbReference type="PANTHER" id="PTHR10381">
    <property type="entry name" value="ATP-DEPENDENT CLP PROTEASE PROTEOLYTIC SUBUNIT"/>
    <property type="match status" value="1"/>
</dbReference>
<dbReference type="PANTHER" id="PTHR10381:SF70">
    <property type="entry name" value="ATP-DEPENDENT CLP PROTEASE PROTEOLYTIC SUBUNIT"/>
    <property type="match status" value="1"/>
</dbReference>
<dbReference type="Pfam" id="PF00574">
    <property type="entry name" value="CLP_protease"/>
    <property type="match status" value="1"/>
</dbReference>
<dbReference type="PRINTS" id="PR00127">
    <property type="entry name" value="CLPPROTEASEP"/>
</dbReference>
<dbReference type="SUPFAM" id="SSF52096">
    <property type="entry name" value="ClpP/crotonase"/>
    <property type="match status" value="1"/>
</dbReference>
<dbReference type="PROSITE" id="PS00382">
    <property type="entry name" value="CLP_PROTEASE_HIS"/>
    <property type="match status" value="1"/>
</dbReference>
<dbReference type="PROSITE" id="PS00381">
    <property type="entry name" value="CLP_PROTEASE_SER"/>
    <property type="match status" value="1"/>
</dbReference>
<comment type="function">
    <text evidence="1">Cleaves peptides in various proteins in a process that requires ATP hydrolysis. Has a chymotrypsin-like activity. Plays a major role in the degradation of misfolded proteins.</text>
</comment>
<comment type="catalytic activity">
    <reaction evidence="1">
        <text>Hydrolysis of proteins to small peptides in the presence of ATP and magnesium. alpha-casein is the usual test substrate. In the absence of ATP, only oligopeptides shorter than five residues are hydrolyzed (such as succinyl-Leu-Tyr-|-NHMec, and Leu-Tyr-Leu-|-Tyr-Trp, in which cleavage of the -Tyr-|-Leu- and -Tyr-|-Trp bonds also occurs).</text>
        <dbReference type="EC" id="3.4.21.92"/>
    </reaction>
</comment>
<comment type="subunit">
    <text evidence="1">Fourteen ClpP subunits assemble into 2 heptameric rings which stack back to back to give a disk-like structure with a central cavity, resembling the structure of eukaryotic proteasomes.</text>
</comment>
<comment type="subcellular location">
    <subcellularLocation>
        <location evidence="1">Cytoplasm</location>
    </subcellularLocation>
</comment>
<comment type="similarity">
    <text evidence="1">Belongs to the peptidase S14 family.</text>
</comment>
<keyword id="KW-0963">Cytoplasm</keyword>
<keyword id="KW-0378">Hydrolase</keyword>
<keyword id="KW-0645">Protease</keyword>
<keyword id="KW-1185">Reference proteome</keyword>
<keyword id="KW-0720">Serine protease</keyword>
<sequence>MDIMNNLPIPMVVEQTGRGERAFDIYSRLLKERVVFLVGEVNDASANLVVAQLLFLEAENPDQDIHFYINSPGGSVTAGMSIYDTMQFIKPDVSTMVLGQAASMGAVLLAAGAAGKRYALPNSRVMIHQPLGGFRGQASDIDIHAREILFIRERLNQILAKHSGQDLETISRDTERDNFMSAERAQEYGLVDAILTHRESVSA</sequence>